<evidence type="ECO:0000255" key="1">
    <source>
        <dbReference type="HAMAP-Rule" id="MF_01593"/>
    </source>
</evidence>
<sequence>MIKWPWKANHTAALAPLPWEAALAIPLLAGLSDEQQQKLVRLSERFLQQKRLVPLQGFELDELKSARIALLFCLPVLELGLEWLDGFHEVLIYPAPFVVDDEWEDDIGLVHNQRVVQSGQSWQQGPIILNWLDIQDSFDASGFNLIIHEVAHKLDMRNGDRASGIPLIALREVAGWEHDLHAAMENIQDEIDLVGESAASIDAYAATDPAECFAVLSEYFFSAPELFAPRFPSLWQRFCHFYGQDPLLRLRLRETPALSDGGQVH</sequence>
<organism>
    <name type="scientific">Cronobacter sakazakii (strain ATCC BAA-894)</name>
    <name type="common">Enterobacter sakazakii</name>
    <dbReference type="NCBI Taxonomy" id="290339"/>
    <lineage>
        <taxon>Bacteria</taxon>
        <taxon>Pseudomonadati</taxon>
        <taxon>Pseudomonadota</taxon>
        <taxon>Gammaproteobacteria</taxon>
        <taxon>Enterobacterales</taxon>
        <taxon>Enterobacteriaceae</taxon>
        <taxon>Cronobacter</taxon>
    </lineage>
</organism>
<feature type="chain" id="PRO_0000316307" description="Mlc titration factor A">
    <location>
        <begin position="1"/>
        <end position="265"/>
    </location>
</feature>
<feature type="binding site" evidence="1">
    <location>
        <position position="111"/>
    </location>
    <ligand>
        <name>Zn(2+)</name>
        <dbReference type="ChEBI" id="CHEBI:29105"/>
    </ligand>
</feature>
<feature type="binding site" evidence="1">
    <location>
        <position position="148"/>
    </location>
    <ligand>
        <name>Zn(2+)</name>
        <dbReference type="ChEBI" id="CHEBI:29105"/>
    </ligand>
</feature>
<feature type="binding site" evidence="1">
    <location>
        <position position="152"/>
    </location>
    <ligand>
        <name>Zn(2+)</name>
        <dbReference type="ChEBI" id="CHEBI:29105"/>
    </ligand>
</feature>
<feature type="binding site" evidence="1">
    <location>
        <position position="211"/>
    </location>
    <ligand>
        <name>Zn(2+)</name>
        <dbReference type="ChEBI" id="CHEBI:29105"/>
    </ligand>
</feature>
<name>MTFA_CROS8</name>
<proteinExistence type="inferred from homology"/>
<keyword id="KW-0031">Aminopeptidase</keyword>
<keyword id="KW-0963">Cytoplasm</keyword>
<keyword id="KW-0378">Hydrolase</keyword>
<keyword id="KW-0479">Metal-binding</keyword>
<keyword id="KW-0482">Metalloprotease</keyword>
<keyword id="KW-0645">Protease</keyword>
<keyword id="KW-1185">Reference proteome</keyword>
<keyword id="KW-0862">Zinc</keyword>
<comment type="function">
    <text evidence="1">Involved in the modulation of the activity of the glucose-phosphotransferase system (glucose-PTS). Interacts with the transcriptional repressor Mlc, preventing its interaction with DNA and leading to the modulation of expression of genes regulated by Mlc, including ptsG, which encodes the PTS system glucose-specific EIICB component.</text>
</comment>
<comment type="function">
    <text evidence="1">Shows zinc-dependent metallopeptidase activity.</text>
</comment>
<comment type="cofactor">
    <cofactor evidence="1">
        <name>Zn(2+)</name>
        <dbReference type="ChEBI" id="CHEBI:29105"/>
    </cofactor>
    <text evidence="1">Binds 1 zinc ion per subunit.</text>
</comment>
<comment type="subunit">
    <text evidence="1">Interacts with Mlc.</text>
</comment>
<comment type="subcellular location">
    <subcellularLocation>
        <location evidence="1">Cytoplasm</location>
    </subcellularLocation>
</comment>
<comment type="similarity">
    <text evidence="1">Belongs to the MtfA family.</text>
</comment>
<dbReference type="EC" id="3.4.11.-" evidence="1"/>
<dbReference type="EMBL" id="CP000783">
    <property type="protein sequence ID" value="ABU76491.1"/>
    <property type="molecule type" value="Genomic_DNA"/>
</dbReference>
<dbReference type="RefSeq" id="WP_004387292.1">
    <property type="nucleotide sequence ID" value="NC_009778.1"/>
</dbReference>
<dbReference type="SMR" id="A7MJM0"/>
<dbReference type="MEROPS" id="M90.001"/>
<dbReference type="GeneID" id="56730100"/>
<dbReference type="KEGG" id="esa:ESA_01228"/>
<dbReference type="HOGENOM" id="CLU_063037_2_0_6"/>
<dbReference type="Proteomes" id="UP000000260">
    <property type="component" value="Chromosome"/>
</dbReference>
<dbReference type="GO" id="GO:0005829">
    <property type="term" value="C:cytosol"/>
    <property type="evidence" value="ECO:0007669"/>
    <property type="project" value="TreeGrafter"/>
</dbReference>
<dbReference type="GO" id="GO:0004177">
    <property type="term" value="F:aminopeptidase activity"/>
    <property type="evidence" value="ECO:0007669"/>
    <property type="project" value="UniProtKB-UniRule"/>
</dbReference>
<dbReference type="GO" id="GO:0008237">
    <property type="term" value="F:metallopeptidase activity"/>
    <property type="evidence" value="ECO:0007669"/>
    <property type="project" value="UniProtKB-UniRule"/>
</dbReference>
<dbReference type="GO" id="GO:0008270">
    <property type="term" value="F:zinc ion binding"/>
    <property type="evidence" value="ECO:0007669"/>
    <property type="project" value="UniProtKB-UniRule"/>
</dbReference>
<dbReference type="GO" id="GO:0006508">
    <property type="term" value="P:proteolysis"/>
    <property type="evidence" value="ECO:0007669"/>
    <property type="project" value="UniProtKB-KW"/>
</dbReference>
<dbReference type="CDD" id="cd20169">
    <property type="entry name" value="Peptidase_M90_mtfA"/>
    <property type="match status" value="1"/>
</dbReference>
<dbReference type="FunFam" id="1.10.472.150:FF:000001">
    <property type="entry name" value="Protein MtfA"/>
    <property type="match status" value="1"/>
</dbReference>
<dbReference type="FunFam" id="3.40.390.10:FF:000012">
    <property type="entry name" value="Protein MtfA"/>
    <property type="match status" value="1"/>
</dbReference>
<dbReference type="Gene3D" id="3.40.390.10">
    <property type="entry name" value="Collagenase (Catalytic Domain)"/>
    <property type="match status" value="1"/>
</dbReference>
<dbReference type="Gene3D" id="1.10.472.150">
    <property type="entry name" value="Glucose-regulated metallo-peptidase M90, N-terminal domain"/>
    <property type="match status" value="1"/>
</dbReference>
<dbReference type="HAMAP" id="MF_01593">
    <property type="entry name" value="MtfA"/>
    <property type="match status" value="1"/>
</dbReference>
<dbReference type="InterPro" id="IPR024079">
    <property type="entry name" value="MetalloPept_cat_dom_sf"/>
</dbReference>
<dbReference type="InterPro" id="IPR057256">
    <property type="entry name" value="MtfA_enterob"/>
</dbReference>
<dbReference type="InterPro" id="IPR010384">
    <property type="entry name" value="MtfA_fam"/>
</dbReference>
<dbReference type="InterPro" id="IPR042252">
    <property type="entry name" value="MtfA_N"/>
</dbReference>
<dbReference type="NCBIfam" id="NF011939">
    <property type="entry name" value="PRK15410.1"/>
    <property type="match status" value="1"/>
</dbReference>
<dbReference type="PANTHER" id="PTHR30164">
    <property type="entry name" value="MTFA PEPTIDASE"/>
    <property type="match status" value="1"/>
</dbReference>
<dbReference type="PANTHER" id="PTHR30164:SF2">
    <property type="entry name" value="PROTEIN MTFA"/>
    <property type="match status" value="1"/>
</dbReference>
<dbReference type="Pfam" id="PF06167">
    <property type="entry name" value="Peptidase_M90"/>
    <property type="match status" value="1"/>
</dbReference>
<dbReference type="SUPFAM" id="SSF55486">
    <property type="entry name" value="Metalloproteases ('zincins'), catalytic domain"/>
    <property type="match status" value="1"/>
</dbReference>
<protein>
    <recommendedName>
        <fullName evidence="1">Mlc titration factor A</fullName>
    </recommendedName>
    <alternativeName>
        <fullName evidence="1">Probable zinc metallopeptidase MtfA</fullName>
        <ecNumber evidence="1">3.4.11.-</ecNumber>
    </alternativeName>
</protein>
<reference key="1">
    <citation type="journal article" date="2010" name="PLoS ONE">
        <title>Genome sequence of Cronobacter sakazakii BAA-894 and comparative genomic hybridization analysis with other Cronobacter species.</title>
        <authorList>
            <person name="Kucerova E."/>
            <person name="Clifton S.W."/>
            <person name="Xia X.Q."/>
            <person name="Long F."/>
            <person name="Porwollik S."/>
            <person name="Fulton L."/>
            <person name="Fronick C."/>
            <person name="Minx P."/>
            <person name="Kyung K."/>
            <person name="Warren W."/>
            <person name="Fulton R."/>
            <person name="Feng D."/>
            <person name="Wollam A."/>
            <person name="Shah N."/>
            <person name="Bhonagiri V."/>
            <person name="Nash W.E."/>
            <person name="Hallsworth-Pepin K."/>
            <person name="Wilson R.K."/>
            <person name="McClelland M."/>
            <person name="Forsythe S.J."/>
        </authorList>
    </citation>
    <scope>NUCLEOTIDE SEQUENCE [LARGE SCALE GENOMIC DNA]</scope>
    <source>
        <strain>ATCC BAA-894</strain>
    </source>
</reference>
<gene>
    <name evidence="1" type="primary">mtfA</name>
    <name type="ordered locus">ESA_01228</name>
</gene>
<accession>A7MJM0</accession>